<name>GATB_RHOBA</name>
<reference key="1">
    <citation type="journal article" date="2003" name="Proc. Natl. Acad. Sci. U.S.A.">
        <title>Complete genome sequence of the marine planctomycete Pirellula sp. strain 1.</title>
        <authorList>
            <person name="Gloeckner F.O."/>
            <person name="Kube M."/>
            <person name="Bauer M."/>
            <person name="Teeling H."/>
            <person name="Lombardot T."/>
            <person name="Ludwig W."/>
            <person name="Gade D."/>
            <person name="Beck A."/>
            <person name="Borzym K."/>
            <person name="Heitmann K."/>
            <person name="Rabus R."/>
            <person name="Schlesner H."/>
            <person name="Amann R."/>
            <person name="Reinhardt R."/>
        </authorList>
    </citation>
    <scope>NUCLEOTIDE SEQUENCE [LARGE SCALE GENOMIC DNA]</scope>
    <source>
        <strain>DSM 10527 / NCIMB 13988 / SH1</strain>
    </source>
</reference>
<protein>
    <recommendedName>
        <fullName evidence="1">Aspartyl/glutamyl-tRNA(Asn/Gln) amidotransferase subunit B</fullName>
        <shortName evidence="1">Asp/Glu-ADT subunit B</shortName>
        <ecNumber evidence="1">6.3.5.-</ecNumber>
    </recommendedName>
</protein>
<gene>
    <name evidence="1" type="primary">gatB</name>
    <name type="ordered locus">RB10852</name>
</gene>
<proteinExistence type="inferred from homology"/>
<accession>Q7UK56</accession>
<dbReference type="EC" id="6.3.5.-" evidence="1"/>
<dbReference type="EMBL" id="BX294152">
    <property type="protein sequence ID" value="CAD77025.1"/>
    <property type="molecule type" value="Genomic_DNA"/>
</dbReference>
<dbReference type="RefSeq" id="NP_869647.1">
    <property type="nucleotide sequence ID" value="NC_005027.1"/>
</dbReference>
<dbReference type="RefSeq" id="WP_011122965.1">
    <property type="nucleotide sequence ID" value="NC_005027.1"/>
</dbReference>
<dbReference type="SMR" id="Q7UK56"/>
<dbReference type="STRING" id="243090.RB10852"/>
<dbReference type="EnsemblBacteria" id="CAD77025">
    <property type="protein sequence ID" value="CAD77025"/>
    <property type="gene ID" value="RB10852"/>
</dbReference>
<dbReference type="KEGG" id="rba:RB10852"/>
<dbReference type="PATRIC" id="fig|243090.15.peg.5238"/>
<dbReference type="eggNOG" id="COG0064">
    <property type="taxonomic scope" value="Bacteria"/>
</dbReference>
<dbReference type="HOGENOM" id="CLU_019240_0_0_0"/>
<dbReference type="InParanoid" id="Q7UK56"/>
<dbReference type="OrthoDB" id="9804078at2"/>
<dbReference type="Proteomes" id="UP000001025">
    <property type="component" value="Chromosome"/>
</dbReference>
<dbReference type="GO" id="GO:0050566">
    <property type="term" value="F:asparaginyl-tRNA synthase (glutamine-hydrolyzing) activity"/>
    <property type="evidence" value="ECO:0007669"/>
    <property type="project" value="RHEA"/>
</dbReference>
<dbReference type="GO" id="GO:0005524">
    <property type="term" value="F:ATP binding"/>
    <property type="evidence" value="ECO:0007669"/>
    <property type="project" value="UniProtKB-KW"/>
</dbReference>
<dbReference type="GO" id="GO:0050567">
    <property type="term" value="F:glutaminyl-tRNA synthase (glutamine-hydrolyzing) activity"/>
    <property type="evidence" value="ECO:0000318"/>
    <property type="project" value="GO_Central"/>
</dbReference>
<dbReference type="GO" id="GO:0070681">
    <property type="term" value="P:glutaminyl-tRNAGln biosynthesis via transamidation"/>
    <property type="evidence" value="ECO:0000318"/>
    <property type="project" value="GO_Central"/>
</dbReference>
<dbReference type="GO" id="GO:0006412">
    <property type="term" value="P:translation"/>
    <property type="evidence" value="ECO:0007669"/>
    <property type="project" value="UniProtKB-UniRule"/>
</dbReference>
<dbReference type="Gene3D" id="1.10.10.410">
    <property type="match status" value="1"/>
</dbReference>
<dbReference type="HAMAP" id="MF_00121">
    <property type="entry name" value="GatB"/>
    <property type="match status" value="1"/>
</dbReference>
<dbReference type="InterPro" id="IPR017959">
    <property type="entry name" value="Asn/Gln-tRNA_amidoTrfase_suB/E"/>
</dbReference>
<dbReference type="InterPro" id="IPR006075">
    <property type="entry name" value="Asn/Gln-tRNA_Trfase_suB/E_cat"/>
</dbReference>
<dbReference type="InterPro" id="IPR018027">
    <property type="entry name" value="Asn/Gln_amidotransferase"/>
</dbReference>
<dbReference type="InterPro" id="IPR003789">
    <property type="entry name" value="Asn/Gln_tRNA_amidoTrase-B-like"/>
</dbReference>
<dbReference type="InterPro" id="IPR004413">
    <property type="entry name" value="GatB"/>
</dbReference>
<dbReference type="InterPro" id="IPR023168">
    <property type="entry name" value="GatB_Yqey_C_2"/>
</dbReference>
<dbReference type="InterPro" id="IPR017958">
    <property type="entry name" value="Gln-tRNA_amidoTrfase_suB_CS"/>
</dbReference>
<dbReference type="InterPro" id="IPR014746">
    <property type="entry name" value="Gln_synth/guanido_kin_cat_dom"/>
</dbReference>
<dbReference type="NCBIfam" id="TIGR00133">
    <property type="entry name" value="gatB"/>
    <property type="match status" value="1"/>
</dbReference>
<dbReference type="NCBIfam" id="NF004012">
    <property type="entry name" value="PRK05477.1-2"/>
    <property type="match status" value="1"/>
</dbReference>
<dbReference type="NCBIfam" id="NF004014">
    <property type="entry name" value="PRK05477.1-4"/>
    <property type="match status" value="1"/>
</dbReference>
<dbReference type="PANTHER" id="PTHR11659">
    <property type="entry name" value="GLUTAMYL-TRNA GLN AMIDOTRANSFERASE SUBUNIT B MITOCHONDRIAL AND PROKARYOTIC PET112-RELATED"/>
    <property type="match status" value="1"/>
</dbReference>
<dbReference type="PANTHER" id="PTHR11659:SF0">
    <property type="entry name" value="GLUTAMYL-TRNA(GLN) AMIDOTRANSFERASE SUBUNIT B, MITOCHONDRIAL"/>
    <property type="match status" value="1"/>
</dbReference>
<dbReference type="Pfam" id="PF02934">
    <property type="entry name" value="GatB_N"/>
    <property type="match status" value="1"/>
</dbReference>
<dbReference type="Pfam" id="PF02637">
    <property type="entry name" value="GatB_Yqey"/>
    <property type="match status" value="1"/>
</dbReference>
<dbReference type="SMART" id="SM00845">
    <property type="entry name" value="GatB_Yqey"/>
    <property type="match status" value="1"/>
</dbReference>
<dbReference type="SUPFAM" id="SSF89095">
    <property type="entry name" value="GatB/YqeY motif"/>
    <property type="match status" value="1"/>
</dbReference>
<dbReference type="SUPFAM" id="SSF55931">
    <property type="entry name" value="Glutamine synthetase/guanido kinase"/>
    <property type="match status" value="1"/>
</dbReference>
<dbReference type="PROSITE" id="PS01234">
    <property type="entry name" value="GATB"/>
    <property type="match status" value="1"/>
</dbReference>
<keyword id="KW-0067">ATP-binding</keyword>
<keyword id="KW-0436">Ligase</keyword>
<keyword id="KW-0547">Nucleotide-binding</keyword>
<keyword id="KW-0648">Protein biosynthesis</keyword>
<keyword id="KW-1185">Reference proteome</keyword>
<comment type="function">
    <text evidence="1">Allows the formation of correctly charged Asn-tRNA(Asn) or Gln-tRNA(Gln) through the transamidation of misacylated Asp-tRNA(Asn) or Glu-tRNA(Gln) in organisms which lack either or both of asparaginyl-tRNA or glutaminyl-tRNA synthetases. The reaction takes place in the presence of glutamine and ATP through an activated phospho-Asp-tRNA(Asn) or phospho-Glu-tRNA(Gln).</text>
</comment>
<comment type="catalytic activity">
    <reaction evidence="1">
        <text>L-glutamyl-tRNA(Gln) + L-glutamine + ATP + H2O = L-glutaminyl-tRNA(Gln) + L-glutamate + ADP + phosphate + H(+)</text>
        <dbReference type="Rhea" id="RHEA:17521"/>
        <dbReference type="Rhea" id="RHEA-COMP:9681"/>
        <dbReference type="Rhea" id="RHEA-COMP:9684"/>
        <dbReference type="ChEBI" id="CHEBI:15377"/>
        <dbReference type="ChEBI" id="CHEBI:15378"/>
        <dbReference type="ChEBI" id="CHEBI:29985"/>
        <dbReference type="ChEBI" id="CHEBI:30616"/>
        <dbReference type="ChEBI" id="CHEBI:43474"/>
        <dbReference type="ChEBI" id="CHEBI:58359"/>
        <dbReference type="ChEBI" id="CHEBI:78520"/>
        <dbReference type="ChEBI" id="CHEBI:78521"/>
        <dbReference type="ChEBI" id="CHEBI:456216"/>
    </reaction>
</comment>
<comment type="catalytic activity">
    <reaction evidence="1">
        <text>L-aspartyl-tRNA(Asn) + L-glutamine + ATP + H2O = L-asparaginyl-tRNA(Asn) + L-glutamate + ADP + phosphate + 2 H(+)</text>
        <dbReference type="Rhea" id="RHEA:14513"/>
        <dbReference type="Rhea" id="RHEA-COMP:9674"/>
        <dbReference type="Rhea" id="RHEA-COMP:9677"/>
        <dbReference type="ChEBI" id="CHEBI:15377"/>
        <dbReference type="ChEBI" id="CHEBI:15378"/>
        <dbReference type="ChEBI" id="CHEBI:29985"/>
        <dbReference type="ChEBI" id="CHEBI:30616"/>
        <dbReference type="ChEBI" id="CHEBI:43474"/>
        <dbReference type="ChEBI" id="CHEBI:58359"/>
        <dbReference type="ChEBI" id="CHEBI:78515"/>
        <dbReference type="ChEBI" id="CHEBI:78516"/>
        <dbReference type="ChEBI" id="CHEBI:456216"/>
    </reaction>
</comment>
<comment type="subunit">
    <text evidence="1">Heterotrimer of A, B and C subunits.</text>
</comment>
<comment type="similarity">
    <text evidence="1">Belongs to the GatB/GatE family. GatB subfamily.</text>
</comment>
<feature type="chain" id="PRO_0000148829" description="Aspartyl/glutamyl-tRNA(Asn/Gln) amidotransferase subunit B">
    <location>
        <begin position="1"/>
        <end position="497"/>
    </location>
</feature>
<evidence type="ECO:0000255" key="1">
    <source>
        <dbReference type="HAMAP-Rule" id="MF_00121"/>
    </source>
</evidence>
<sequence>MTASAILACQKYPVTTIIGLEVHVQLKTQTKLFCGCTTEFGAPPNTQVCPVCLGMPGALPVMNREAIALSVKTGLALNCDIPPLTKWDRKQYFYPDLPKGYQISQFDLPICADGHLAISTDDGETERRIGLVRAHLEEDAGKSMHDEASGISDTKIDLNRCGTPLLEIVSQPDLRSADEAKAYLSELKLLLTHLKVSDCEMQEGSLRVDANVNLHIDVEGKKIATPIVEIKNLNSFRNVQRAIDYEVQRQLVDWEENRQTIDDAPKTTRGWDDSAEQTFAQREKEESADYRYFPDPDLLPVRLPREYVESISESLGELPAVTRERLQTQHGIKPYDADVIVNQGPDVIDYFETAVGASGDGRRTSSWMMQDVMRTMKERSIDIDAFPIPAERLGELIRMIADGKLDNNRARDVFEHLLTHDESIEQATKSLGIEAVDDDALESLCKELLAANPQVVEDVKGGKQQAVGALIGQAKKKNPNASPQAVRQLLIDLIAKM</sequence>
<organism>
    <name type="scientific">Rhodopirellula baltica (strain DSM 10527 / NCIMB 13988 / SH1)</name>
    <dbReference type="NCBI Taxonomy" id="243090"/>
    <lineage>
        <taxon>Bacteria</taxon>
        <taxon>Pseudomonadati</taxon>
        <taxon>Planctomycetota</taxon>
        <taxon>Planctomycetia</taxon>
        <taxon>Pirellulales</taxon>
        <taxon>Pirellulaceae</taxon>
        <taxon>Rhodopirellula</taxon>
    </lineage>
</organism>